<reference key="1">
    <citation type="submission" date="2012-10" db="EMBL/GenBank/DDBJ databases">
        <title>The Draft Genome of Microtus ochrogaster.</title>
        <authorList>
            <person name="Di Palma F."/>
            <person name="Alfoldi J."/>
            <person name="Johnson J."/>
            <person name="Berlin A."/>
            <person name="Gnerre S."/>
            <person name="Jaffe D."/>
            <person name="MacCallum I."/>
            <person name="Young S."/>
            <person name="Walker B.J."/>
            <person name="Lindblad-Toh K."/>
        </authorList>
    </citation>
    <scope>NUCLEOTIDE SEQUENCE [LARGE SCALE GENOMIC DNA]</scope>
</reference>
<reference key="2">
    <citation type="unpublished observations" date="2021-07">
        <authorList>
            <person name="Puppione D.L."/>
        </authorList>
    </citation>
    <scope>IDENTIFICATION</scope>
</reference>
<gene>
    <name type="primary">APOC2</name>
</gene>
<comment type="function">
    <text evidence="1">Component of chylomicrons, very low-density lipoproteins (VLDL), low-density lipoproteins (LDL), and high-density lipoproteins (HDL) in plasma. Plays an important role in lipoprotein metabolism as an activator of lipoprotein lipase.</text>
</comment>
<comment type="subcellular location">
    <subcellularLocation>
        <location evidence="1">Secreted</location>
    </subcellularLocation>
</comment>
<comment type="PTM">
    <text evidence="1">Proapolipoprotein C-II is synthesized as a sialic acid containing glycoprotein which is subsequently desialylated prior to its proteolytic processing.</text>
</comment>
<comment type="PTM">
    <text evidence="1">Proapolipoprotein C-II, the major form found in plasma undergoes proteolytic cleavage of its N-terminal hexapeptide to generate the mature form apolipoprotein C-II, which occurs as the minor form in plasma.</text>
</comment>
<comment type="similarity">
    <text evidence="3">Belongs to the apolipoprotein C2 family.</text>
</comment>
<name>APOC2_MICOH</name>
<feature type="signal peptide" evidence="2">
    <location>
        <begin position="1"/>
        <end position="22"/>
    </location>
</feature>
<feature type="chain" id="PRO_0000454000" description="Proapolipoprotein C-II">
    <location>
        <begin position="23"/>
        <end position="100"/>
    </location>
</feature>
<feature type="chain" id="PRO_0000454001" description="Apolipoprotein C-II" evidence="1">
    <location>
        <begin position="29"/>
        <end position="100"/>
    </location>
</feature>
<feature type="region of interest" description="Lipid binding" evidence="1">
    <location>
        <begin position="66"/>
        <end position="74"/>
    </location>
</feature>
<feature type="region of interest" description="Lipoprotein lipase cofactor" evidence="1">
    <location>
        <begin position="78"/>
        <end position="100"/>
    </location>
</feature>
<sequence length="100" mass="11063">MGSRFLLALFLILLVLGCEVQAAQQLQQDDPGSSALLDKVQESISSYWDTAKAAAQDLYQKTYLTSVDEKLRDMYSKSSAAMTTYASIFTDQILTLLKGE</sequence>
<keyword id="KW-0162">Chylomicron</keyword>
<keyword id="KW-0345">HDL</keyword>
<keyword id="KW-0427">LDL</keyword>
<keyword id="KW-0442">Lipid degradation</keyword>
<keyword id="KW-0443">Lipid metabolism</keyword>
<keyword id="KW-0445">Lipid transport</keyword>
<keyword id="KW-0964">Secreted</keyword>
<keyword id="KW-0732">Signal</keyword>
<keyword id="KW-0813">Transport</keyword>
<keyword id="KW-0850">VLDL</keyword>
<proteinExistence type="inferred from homology"/>
<evidence type="ECO:0000250" key="1">
    <source>
        <dbReference type="UniProtKB" id="P02655"/>
    </source>
</evidence>
<evidence type="ECO:0000255" key="2"/>
<evidence type="ECO:0000305" key="3"/>
<protein>
    <recommendedName>
        <fullName>Apolipoprotein C-II</fullName>
        <shortName>Apo-CII</shortName>
        <shortName>ApoC-II</shortName>
    </recommendedName>
    <alternativeName>
        <fullName>Apolipoprotein C2</fullName>
    </alternativeName>
    <component>
        <recommendedName>
            <fullName>Proapolipoprotein C-II</fullName>
            <shortName>ProapoC-II</shortName>
        </recommendedName>
    </component>
</protein>
<organism>
    <name type="scientific">Microtus ochrogaster</name>
    <name type="common">Prairie vole</name>
    <dbReference type="NCBI Taxonomy" id="79684"/>
    <lineage>
        <taxon>Eukaryota</taxon>
        <taxon>Metazoa</taxon>
        <taxon>Chordata</taxon>
        <taxon>Craniata</taxon>
        <taxon>Vertebrata</taxon>
        <taxon>Euteleostomi</taxon>
        <taxon>Mammalia</taxon>
        <taxon>Eutheria</taxon>
        <taxon>Euarchontoglires</taxon>
        <taxon>Glires</taxon>
        <taxon>Rodentia</taxon>
        <taxon>Myomorpha</taxon>
        <taxon>Muroidea</taxon>
        <taxon>Cricetidae</taxon>
        <taxon>Arvicolinae</taxon>
        <taxon>Microtus</taxon>
    </lineage>
</organism>
<accession>P0DUY0</accession>
<dbReference type="EMBL" id="AHZW01164711">
    <property type="status" value="NOT_ANNOTATED_CDS"/>
    <property type="molecule type" value="Genomic_DNA"/>
</dbReference>
<dbReference type="RefSeq" id="XP_005370364.1">
    <property type="nucleotide sequence ID" value="XM_005370307.2"/>
</dbReference>
<dbReference type="SMR" id="P0DUY0"/>
<dbReference type="GeneID" id="101988608"/>
<dbReference type="CTD" id="344"/>
<dbReference type="OrthoDB" id="9881800at2759"/>
<dbReference type="Proteomes" id="UP000694915">
    <property type="component" value="Unplaced"/>
</dbReference>
<dbReference type="GO" id="GO:0042627">
    <property type="term" value="C:chylomicron"/>
    <property type="evidence" value="ECO:0007669"/>
    <property type="project" value="UniProtKB-KW"/>
</dbReference>
<dbReference type="GO" id="GO:0034364">
    <property type="term" value="C:high-density lipoprotein particle"/>
    <property type="evidence" value="ECO:0007669"/>
    <property type="project" value="UniProtKB-KW"/>
</dbReference>
<dbReference type="GO" id="GO:0034362">
    <property type="term" value="C:low-density lipoprotein particle"/>
    <property type="evidence" value="ECO:0007669"/>
    <property type="project" value="UniProtKB-KW"/>
</dbReference>
<dbReference type="GO" id="GO:0034361">
    <property type="term" value="C:very-low-density lipoprotein particle"/>
    <property type="evidence" value="ECO:0007669"/>
    <property type="project" value="UniProtKB-KW"/>
</dbReference>
<dbReference type="GO" id="GO:0016004">
    <property type="term" value="F:phospholipase activator activity"/>
    <property type="evidence" value="ECO:0007669"/>
    <property type="project" value="TreeGrafter"/>
</dbReference>
<dbReference type="GO" id="GO:0043274">
    <property type="term" value="F:phospholipase binding"/>
    <property type="evidence" value="ECO:0007669"/>
    <property type="project" value="TreeGrafter"/>
</dbReference>
<dbReference type="GO" id="GO:0016042">
    <property type="term" value="P:lipid catabolic process"/>
    <property type="evidence" value="ECO:0007669"/>
    <property type="project" value="UniProtKB-KW"/>
</dbReference>
<dbReference type="GO" id="GO:0006869">
    <property type="term" value="P:lipid transport"/>
    <property type="evidence" value="ECO:0007669"/>
    <property type="project" value="UniProtKB-KW"/>
</dbReference>
<dbReference type="GO" id="GO:0060697">
    <property type="term" value="P:positive regulation of phospholipid catabolic process"/>
    <property type="evidence" value="ECO:0007669"/>
    <property type="project" value="TreeGrafter"/>
</dbReference>
<dbReference type="FunFam" id="1.10.1440.10:FF:000001">
    <property type="entry name" value="Apolipoprotein C-II"/>
    <property type="match status" value="1"/>
</dbReference>
<dbReference type="Gene3D" id="1.10.1440.10">
    <property type="entry name" value="Apolipoprotein C-II"/>
    <property type="match status" value="1"/>
</dbReference>
<dbReference type="InterPro" id="IPR008019">
    <property type="entry name" value="Apo-CII"/>
</dbReference>
<dbReference type="InterPro" id="IPR023121">
    <property type="entry name" value="ApoC-II_dom_sf"/>
</dbReference>
<dbReference type="PANTHER" id="PTHR16566">
    <property type="entry name" value="APOLIPOPROTEIN C-II"/>
    <property type="match status" value="1"/>
</dbReference>
<dbReference type="PANTHER" id="PTHR16566:SF0">
    <property type="entry name" value="APOLIPOPROTEIN C-II"/>
    <property type="match status" value="1"/>
</dbReference>
<dbReference type="Pfam" id="PF05355">
    <property type="entry name" value="Apo-CII"/>
    <property type="match status" value="1"/>
</dbReference>